<gene>
    <name type="primary">ESA1</name>
    <name type="ORF">UMAG_05240</name>
</gene>
<comment type="function">
    <text evidence="2 3">Catalytic component of the NuA4 histone acetyltransferase (HAT) complex which is involved in epigenetic transcriptional activation of selected genes principally by acetylation of nucleosomal histones H4, H3, H2B, H2A and H2A variant H2A.Z (By similarity). Acetylates histone H4 to form H4K5ac, H4K8ac, H4K12ac and H4K16ac, histone H3 to form H3K14ac, and histone H2A to form H2AK4ac and H2AK7ac (By similarity). The NuA4 complex is involved in the DNA damage response and is required for chromosome segregation. The NuA4 complex plays a direct role in repair of DNA double-strand breaks (DSBs) through homologous recombination (By similarity). Recruitment to promoters depends on H3K4me. Also acetylates non-histone proteins (By similarity). In addition to protein acetyltransferase, can use different acyl-CoA substrates, such as 2-hydroxyisobutanoyl-CoA (2-hydroxyisobutyryl-CoA) or (2E)-butenoyl-CoA (crotonyl-CoA), and is able to mediate protein 2-hydroxyisobutyrylation and crotonylation, respectively (By similarity).</text>
</comment>
<comment type="catalytic activity">
    <reaction evidence="2">
        <text>L-lysyl-[histone] + acetyl-CoA = N(6)-acetyl-L-lysyl-[histone] + CoA + H(+)</text>
        <dbReference type="Rhea" id="RHEA:21992"/>
        <dbReference type="Rhea" id="RHEA-COMP:9845"/>
        <dbReference type="Rhea" id="RHEA-COMP:11338"/>
        <dbReference type="ChEBI" id="CHEBI:15378"/>
        <dbReference type="ChEBI" id="CHEBI:29969"/>
        <dbReference type="ChEBI" id="CHEBI:57287"/>
        <dbReference type="ChEBI" id="CHEBI:57288"/>
        <dbReference type="ChEBI" id="CHEBI:61930"/>
        <dbReference type="EC" id="2.3.1.48"/>
    </reaction>
    <physiologicalReaction direction="left-to-right" evidence="2">
        <dbReference type="Rhea" id="RHEA:21993"/>
    </physiologicalReaction>
</comment>
<comment type="catalytic activity">
    <reaction evidence="3">
        <text>L-lysyl-[protein] + acetyl-CoA = N(6)-acetyl-L-lysyl-[protein] + CoA + H(+)</text>
        <dbReference type="Rhea" id="RHEA:45948"/>
        <dbReference type="Rhea" id="RHEA-COMP:9752"/>
        <dbReference type="Rhea" id="RHEA-COMP:10731"/>
        <dbReference type="ChEBI" id="CHEBI:15378"/>
        <dbReference type="ChEBI" id="CHEBI:29969"/>
        <dbReference type="ChEBI" id="CHEBI:57287"/>
        <dbReference type="ChEBI" id="CHEBI:57288"/>
        <dbReference type="ChEBI" id="CHEBI:61930"/>
    </reaction>
    <physiologicalReaction direction="left-to-right" evidence="3">
        <dbReference type="Rhea" id="RHEA:45949"/>
    </physiologicalReaction>
</comment>
<comment type="catalytic activity">
    <reaction evidence="2">
        <text>2-hydroxyisobutanoyl-CoA + L-lysyl-[protein] = N(6)-(2-hydroxyisobutanoyl)-L-lysyl-[protein] + CoA + H(+)</text>
        <dbReference type="Rhea" id="RHEA:24180"/>
        <dbReference type="Rhea" id="RHEA-COMP:9752"/>
        <dbReference type="Rhea" id="RHEA-COMP:15921"/>
        <dbReference type="ChEBI" id="CHEBI:15378"/>
        <dbReference type="ChEBI" id="CHEBI:29969"/>
        <dbReference type="ChEBI" id="CHEBI:57287"/>
        <dbReference type="ChEBI" id="CHEBI:131780"/>
        <dbReference type="ChEBI" id="CHEBI:144968"/>
    </reaction>
    <physiologicalReaction direction="left-to-right" evidence="2">
        <dbReference type="Rhea" id="RHEA:24181"/>
    </physiologicalReaction>
</comment>
<comment type="catalytic activity">
    <reaction evidence="3">
        <text>(2E)-butenoyl-CoA + L-lysyl-[protein] = N(6)-(2E)-butenoyl-L-lysyl-[protein] + CoA + H(+)</text>
        <dbReference type="Rhea" id="RHEA:53908"/>
        <dbReference type="Rhea" id="RHEA-COMP:9752"/>
        <dbReference type="Rhea" id="RHEA-COMP:13707"/>
        <dbReference type="ChEBI" id="CHEBI:15378"/>
        <dbReference type="ChEBI" id="CHEBI:29969"/>
        <dbReference type="ChEBI" id="CHEBI:57287"/>
        <dbReference type="ChEBI" id="CHEBI:57332"/>
        <dbReference type="ChEBI" id="CHEBI:137954"/>
    </reaction>
    <physiologicalReaction direction="left-to-right" evidence="3">
        <dbReference type="Rhea" id="RHEA:53909"/>
    </physiologicalReaction>
</comment>
<comment type="subunit">
    <text evidence="3">Component of the NuA4 histone acetyltransferase complex.</text>
</comment>
<comment type="subcellular location">
    <subcellularLocation>
        <location evidence="2">Nucleus</location>
    </subcellularLocation>
    <subcellularLocation>
        <location evidence="2">Chromosome</location>
    </subcellularLocation>
    <text evidence="2">Following DNA damage, localizes to sites of DNA damage, such as double stand breaks (DSBs).</text>
</comment>
<comment type="domain">
    <text evidence="3">The ESA1-RPD3 motif is common to ESA1 and RPD3 and is required for ESA1 histone acetyl-transferase (HAT) activity and RPD3 histone deacetylase (HDAC) activity.</text>
</comment>
<comment type="PTM">
    <text evidence="3">Autoacetylation at Lys-384 is required for proper function.</text>
</comment>
<comment type="similarity">
    <text evidence="7">Belongs to the MYST (SAS/MOZ) family.</text>
</comment>
<name>ESA1_MYCMD</name>
<accession>Q4P3S3</accession>
<accession>A0A0D1E2X9</accession>
<feature type="chain" id="PRO_0000051560" description="Histone acetyltransferase ESA1">
    <location>
        <begin position="1"/>
        <end position="565"/>
    </location>
</feature>
<feature type="domain" description="Tudor-knot" evidence="4">
    <location>
        <begin position="38"/>
        <end position="117"/>
    </location>
</feature>
<feature type="domain" description="MYST-type HAT" evidence="5">
    <location>
        <begin position="284"/>
        <end position="553"/>
    </location>
</feature>
<feature type="zinc finger region" description="C2HC MYST-type" evidence="5">
    <location>
        <begin position="317"/>
        <end position="342"/>
    </location>
</feature>
<feature type="region of interest" description="Disordered" evidence="6">
    <location>
        <begin position="1"/>
        <end position="33"/>
    </location>
</feature>
<feature type="region of interest" description="Disordered" evidence="6">
    <location>
        <begin position="173"/>
        <end position="217"/>
    </location>
</feature>
<feature type="short sequence motif" description="ESA1-RPD3 motif" evidence="1">
    <location>
        <begin position="367"/>
        <end position="388"/>
    </location>
</feature>
<feature type="active site" description="Proton donor/acceptor" evidence="3">
    <location>
        <position position="460"/>
    </location>
</feature>
<feature type="binding site" evidence="3">
    <location>
        <begin position="425"/>
        <end position="429"/>
    </location>
    <ligand>
        <name>acetyl-CoA</name>
        <dbReference type="ChEBI" id="CHEBI:57288"/>
    </ligand>
</feature>
<feature type="binding site" evidence="3">
    <location>
        <begin position="434"/>
        <end position="440"/>
    </location>
    <ligand>
        <name>acetyl-CoA</name>
        <dbReference type="ChEBI" id="CHEBI:57288"/>
    </ligand>
</feature>
<feature type="binding site" evidence="3">
    <location>
        <position position="464"/>
    </location>
    <ligand>
        <name>acetyl-CoA</name>
        <dbReference type="ChEBI" id="CHEBI:57288"/>
    </ligand>
</feature>
<feature type="site" description="Important for catalytic activity" evidence="3">
    <location>
        <position position="426"/>
    </location>
</feature>
<feature type="modified residue" description="N6-acetyllysine; by autocatalysis" evidence="3">
    <location>
        <position position="384"/>
    </location>
</feature>
<protein>
    <recommendedName>
        <fullName>Histone acetyltransferase ESA1</fullName>
        <ecNumber evidence="3">2.3.1.48</ecNumber>
    </recommendedName>
    <alternativeName>
        <fullName evidence="7">Protein 2-hydroxyisobutyryltransferase ESA1</fullName>
        <ecNumber evidence="2">2.3.1.-</ecNumber>
    </alternativeName>
    <alternativeName>
        <fullName evidence="7">Protein acetyltransferase ESA1</fullName>
        <ecNumber evidence="3">2.3.1.-</ecNumber>
    </alternativeName>
    <alternativeName>
        <fullName evidence="7">Protein crotonyltransferase ESA1</fullName>
        <ecNumber evidence="3">2.3.1.-</ecNumber>
    </alternativeName>
</protein>
<reference key="1">
    <citation type="journal article" date="2006" name="Nature">
        <title>Insights from the genome of the biotrophic fungal plant pathogen Ustilago maydis.</title>
        <authorList>
            <person name="Kaemper J."/>
            <person name="Kahmann R."/>
            <person name="Boelker M."/>
            <person name="Ma L.-J."/>
            <person name="Brefort T."/>
            <person name="Saville B.J."/>
            <person name="Banuett F."/>
            <person name="Kronstad J.W."/>
            <person name="Gold S.E."/>
            <person name="Mueller O."/>
            <person name="Perlin M.H."/>
            <person name="Woesten H.A.B."/>
            <person name="de Vries R."/>
            <person name="Ruiz-Herrera J."/>
            <person name="Reynaga-Pena C.G."/>
            <person name="Snetselaar K."/>
            <person name="McCann M."/>
            <person name="Perez-Martin J."/>
            <person name="Feldbruegge M."/>
            <person name="Basse C.W."/>
            <person name="Steinberg G."/>
            <person name="Ibeas J.I."/>
            <person name="Holloman W."/>
            <person name="Guzman P."/>
            <person name="Farman M.L."/>
            <person name="Stajich J.E."/>
            <person name="Sentandreu R."/>
            <person name="Gonzalez-Prieto J.M."/>
            <person name="Kennell J.C."/>
            <person name="Molina L."/>
            <person name="Schirawski J."/>
            <person name="Mendoza-Mendoza A."/>
            <person name="Greilinger D."/>
            <person name="Muench K."/>
            <person name="Roessel N."/>
            <person name="Scherer M."/>
            <person name="Vranes M."/>
            <person name="Ladendorf O."/>
            <person name="Vincon V."/>
            <person name="Fuchs U."/>
            <person name="Sandrock B."/>
            <person name="Meng S."/>
            <person name="Ho E.C.H."/>
            <person name="Cahill M.J."/>
            <person name="Boyce K.J."/>
            <person name="Klose J."/>
            <person name="Klosterman S.J."/>
            <person name="Deelstra H.J."/>
            <person name="Ortiz-Castellanos L."/>
            <person name="Li W."/>
            <person name="Sanchez-Alonso P."/>
            <person name="Schreier P.H."/>
            <person name="Haeuser-Hahn I."/>
            <person name="Vaupel M."/>
            <person name="Koopmann E."/>
            <person name="Friedrich G."/>
            <person name="Voss H."/>
            <person name="Schlueter T."/>
            <person name="Margolis J."/>
            <person name="Platt D."/>
            <person name="Swimmer C."/>
            <person name="Gnirke A."/>
            <person name="Chen F."/>
            <person name="Vysotskaia V."/>
            <person name="Mannhaupt G."/>
            <person name="Gueldener U."/>
            <person name="Muensterkoetter M."/>
            <person name="Haase D."/>
            <person name="Oesterheld M."/>
            <person name="Mewes H.-W."/>
            <person name="Mauceli E.W."/>
            <person name="DeCaprio D."/>
            <person name="Wade C.M."/>
            <person name="Butler J."/>
            <person name="Young S.K."/>
            <person name="Jaffe D.B."/>
            <person name="Calvo S.E."/>
            <person name="Nusbaum C."/>
            <person name="Galagan J.E."/>
            <person name="Birren B.W."/>
        </authorList>
    </citation>
    <scope>NUCLEOTIDE SEQUENCE [LARGE SCALE GENOMIC DNA]</scope>
    <source>
        <strain>DSM 14603 / FGSC 9021 / UM521</strain>
    </source>
</reference>
<reference key="2">
    <citation type="submission" date="2014-09" db="EMBL/GenBank/DDBJ databases">
        <authorList>
            <person name="Gueldener U."/>
            <person name="Muensterkoetter M."/>
            <person name="Walter M.C."/>
            <person name="Mannhaupt G."/>
            <person name="Kahmann R."/>
        </authorList>
    </citation>
    <scope>GENOME REANNOTATION</scope>
    <source>
        <strain>DSM 14603 / FGSC 9021 / UM521</strain>
    </source>
</reference>
<organism>
    <name type="scientific">Mycosarcoma maydis</name>
    <name type="common">Corn smut fungus</name>
    <name type="synonym">Ustilago maydis</name>
    <dbReference type="NCBI Taxonomy" id="5270"/>
    <lineage>
        <taxon>Eukaryota</taxon>
        <taxon>Fungi</taxon>
        <taxon>Dikarya</taxon>
        <taxon>Basidiomycota</taxon>
        <taxon>Ustilaginomycotina</taxon>
        <taxon>Ustilaginomycetes</taxon>
        <taxon>Ustilaginales</taxon>
        <taxon>Ustilaginaceae</taxon>
        <taxon>Mycosarcoma</taxon>
    </lineage>
</organism>
<dbReference type="EC" id="2.3.1.48" evidence="3"/>
<dbReference type="EC" id="2.3.1.-" evidence="2 3"/>
<dbReference type="EMBL" id="CM003143">
    <property type="protein sequence ID" value="KIS70171.1"/>
    <property type="molecule type" value="Genomic_DNA"/>
</dbReference>
<dbReference type="RefSeq" id="XP_011388274.1">
    <property type="nucleotide sequence ID" value="XM_011389972.1"/>
</dbReference>
<dbReference type="SMR" id="Q4P3S3"/>
<dbReference type="FunCoup" id="Q4P3S3">
    <property type="interactions" value="676"/>
</dbReference>
<dbReference type="STRING" id="237631.Q4P3S3"/>
<dbReference type="EnsemblFungi" id="KIS70171">
    <property type="protein sequence ID" value="KIS70171"/>
    <property type="gene ID" value="UMAG_05240"/>
</dbReference>
<dbReference type="GeneID" id="23565184"/>
<dbReference type="KEGG" id="uma:UMAG_05240"/>
<dbReference type="VEuPathDB" id="FungiDB:UMAG_05240"/>
<dbReference type="eggNOG" id="KOG2747">
    <property type="taxonomic scope" value="Eukaryota"/>
</dbReference>
<dbReference type="HOGENOM" id="CLU_011815_2_0_1"/>
<dbReference type="InParanoid" id="Q4P3S3"/>
<dbReference type="OMA" id="QYQRHGY"/>
<dbReference type="OrthoDB" id="787137at2759"/>
<dbReference type="Proteomes" id="UP000000561">
    <property type="component" value="Chromosome 4"/>
</dbReference>
<dbReference type="GO" id="GO:0000785">
    <property type="term" value="C:chromatin"/>
    <property type="evidence" value="ECO:0000318"/>
    <property type="project" value="GO_Central"/>
</dbReference>
<dbReference type="GO" id="GO:0035267">
    <property type="term" value="C:NuA4 histone acetyltransferase complex"/>
    <property type="evidence" value="ECO:0007669"/>
    <property type="project" value="EnsemblFungi"/>
</dbReference>
<dbReference type="GO" id="GO:0000786">
    <property type="term" value="C:nucleosome"/>
    <property type="evidence" value="ECO:0007669"/>
    <property type="project" value="EnsemblFungi"/>
</dbReference>
<dbReference type="GO" id="GO:0005634">
    <property type="term" value="C:nucleus"/>
    <property type="evidence" value="ECO:0000318"/>
    <property type="project" value="GO_Central"/>
</dbReference>
<dbReference type="GO" id="GO:0032777">
    <property type="term" value="C:piccolo histone acetyltransferase complex"/>
    <property type="evidence" value="ECO:0007669"/>
    <property type="project" value="EnsemblFungi"/>
</dbReference>
<dbReference type="GO" id="GO:0003682">
    <property type="term" value="F:chromatin binding"/>
    <property type="evidence" value="ECO:0000318"/>
    <property type="project" value="GO_Central"/>
</dbReference>
<dbReference type="GO" id="GO:0004402">
    <property type="term" value="F:histone acetyltransferase activity"/>
    <property type="evidence" value="ECO:0000318"/>
    <property type="project" value="GO_Central"/>
</dbReference>
<dbReference type="GO" id="GO:0140068">
    <property type="term" value="F:histone crotonyltransferase activity"/>
    <property type="evidence" value="ECO:0007669"/>
    <property type="project" value="EnsemblFungi"/>
</dbReference>
<dbReference type="GO" id="GO:0010485">
    <property type="term" value="F:histone H4 acetyltransferase activity"/>
    <property type="evidence" value="ECO:0007669"/>
    <property type="project" value="EnsemblFungi"/>
</dbReference>
<dbReference type="GO" id="GO:0106226">
    <property type="term" value="F:peptide 2-hydroxyisobutyryltransferase activity"/>
    <property type="evidence" value="ECO:0007669"/>
    <property type="project" value="RHEA"/>
</dbReference>
<dbReference type="GO" id="GO:0003712">
    <property type="term" value="F:transcription coregulator activity"/>
    <property type="evidence" value="ECO:0000318"/>
    <property type="project" value="GO_Central"/>
</dbReference>
<dbReference type="GO" id="GO:0008270">
    <property type="term" value="F:zinc ion binding"/>
    <property type="evidence" value="ECO:0007669"/>
    <property type="project" value="UniProtKB-KW"/>
</dbReference>
<dbReference type="GO" id="GO:0006281">
    <property type="term" value="P:DNA repair"/>
    <property type="evidence" value="ECO:0007669"/>
    <property type="project" value="UniProtKB-KW"/>
</dbReference>
<dbReference type="GO" id="GO:0006354">
    <property type="term" value="P:DNA-templated transcription elongation"/>
    <property type="evidence" value="ECO:0007669"/>
    <property type="project" value="EnsemblFungi"/>
</dbReference>
<dbReference type="GO" id="GO:0016239">
    <property type="term" value="P:positive regulation of macroautophagy"/>
    <property type="evidence" value="ECO:0007669"/>
    <property type="project" value="EnsemblFungi"/>
</dbReference>
<dbReference type="GO" id="GO:0032968">
    <property type="term" value="P:positive regulation of transcription elongation by RNA polymerase II"/>
    <property type="evidence" value="ECO:0007669"/>
    <property type="project" value="EnsemblFungi"/>
</dbReference>
<dbReference type="GO" id="GO:0010867">
    <property type="term" value="P:positive regulation of triglyceride biosynthetic process"/>
    <property type="evidence" value="ECO:0007669"/>
    <property type="project" value="EnsemblFungi"/>
</dbReference>
<dbReference type="GO" id="GO:0000183">
    <property type="term" value="P:rDNA heterochromatin formation"/>
    <property type="evidence" value="ECO:0007669"/>
    <property type="project" value="EnsemblFungi"/>
</dbReference>
<dbReference type="GO" id="GO:0051726">
    <property type="term" value="P:regulation of cell cycle"/>
    <property type="evidence" value="ECO:0007669"/>
    <property type="project" value="EnsemblFungi"/>
</dbReference>
<dbReference type="GO" id="GO:0006357">
    <property type="term" value="P:regulation of transcription by RNA polymerase II"/>
    <property type="evidence" value="ECO:0000318"/>
    <property type="project" value="GO_Central"/>
</dbReference>
<dbReference type="FunFam" id="1.10.10.10:FF:000022">
    <property type="entry name" value="Histone acetyltransferase"/>
    <property type="match status" value="1"/>
</dbReference>
<dbReference type="FunFam" id="3.30.60.60:FF:000001">
    <property type="entry name" value="Histone acetyltransferase"/>
    <property type="match status" value="1"/>
</dbReference>
<dbReference type="FunFam" id="3.40.630.30:FF:000002">
    <property type="entry name" value="Histone acetyltransferase"/>
    <property type="match status" value="1"/>
</dbReference>
<dbReference type="Gene3D" id="2.30.30.140">
    <property type="match status" value="1"/>
</dbReference>
<dbReference type="Gene3D" id="3.40.630.30">
    <property type="match status" value="1"/>
</dbReference>
<dbReference type="Gene3D" id="3.30.60.60">
    <property type="entry name" value="N-acetyl transferase-like"/>
    <property type="match status" value="1"/>
</dbReference>
<dbReference type="Gene3D" id="1.10.10.10">
    <property type="entry name" value="Winged helix-like DNA-binding domain superfamily/Winged helix DNA-binding domain"/>
    <property type="match status" value="1"/>
</dbReference>
<dbReference type="InterPro" id="IPR016181">
    <property type="entry name" value="Acyl_CoA_acyltransferase"/>
</dbReference>
<dbReference type="InterPro" id="IPR016197">
    <property type="entry name" value="Chromo-like_dom_sf"/>
</dbReference>
<dbReference type="InterPro" id="IPR002717">
    <property type="entry name" value="HAT_MYST-type"/>
</dbReference>
<dbReference type="InterPro" id="IPR050603">
    <property type="entry name" value="MYST_HAT"/>
</dbReference>
<dbReference type="InterPro" id="IPR025995">
    <property type="entry name" value="Tudor-knot"/>
</dbReference>
<dbReference type="InterPro" id="IPR036388">
    <property type="entry name" value="WH-like_DNA-bd_sf"/>
</dbReference>
<dbReference type="InterPro" id="IPR040706">
    <property type="entry name" value="Zf-MYST"/>
</dbReference>
<dbReference type="PANTHER" id="PTHR10615">
    <property type="entry name" value="HISTONE ACETYLTRANSFERASE"/>
    <property type="match status" value="1"/>
</dbReference>
<dbReference type="PANTHER" id="PTHR10615:SF218">
    <property type="entry name" value="HISTONE ACETYLTRANSFERASE ESA1"/>
    <property type="match status" value="1"/>
</dbReference>
<dbReference type="Pfam" id="PF01853">
    <property type="entry name" value="MOZ_SAS"/>
    <property type="match status" value="1"/>
</dbReference>
<dbReference type="Pfam" id="PF11717">
    <property type="entry name" value="Tudor-knot"/>
    <property type="match status" value="1"/>
</dbReference>
<dbReference type="Pfam" id="PF17772">
    <property type="entry name" value="zf-MYST"/>
    <property type="match status" value="1"/>
</dbReference>
<dbReference type="SUPFAM" id="SSF55729">
    <property type="entry name" value="Acyl-CoA N-acyltransferases (Nat)"/>
    <property type="match status" value="1"/>
</dbReference>
<dbReference type="SUPFAM" id="SSF54160">
    <property type="entry name" value="Chromo domain-like"/>
    <property type="match status" value="1"/>
</dbReference>
<dbReference type="PROSITE" id="PS51726">
    <property type="entry name" value="MYST_HAT"/>
    <property type="match status" value="1"/>
</dbReference>
<sequence>MAPRTQKSTSGTPGGSGTPGPDEGPQISPGGTYGLEDVVVGCKAFVQKPDVVTGEMEERKAEILSIREKPKPRLTKKQQAELADKPAPTLEETLEYYVHYCEFNKRLDEWVSGTRLITSRELEWPKKEVTSDKTKRKVIRAGSGATTPSTPLTPTGKGYRGAGASNLLKKAAAQAAKNVQGESGLETPQKRKADSGDTSTAQSIRADSIDADADGEDDENGAVVAMEMLGGNDQQEKDDVATESNGGLTASLNANQGQETFSKKQEIEKLRTSGSMTQSVSEVARVKNLNKIQMGKSEVETWYFSPYPLEYAHIDTLYICEMCLSYFPSPFTLKRHRSKCTLLHPPGNEIYRHEDISFFEIDGRLQRTWCRNLCLLSKCFLDHKTLYYDVDPFLYYCMVKRDDLGCHLLGYFSKEKDSAENYNVACILTLPQHQRAGYGKLLIEFSYELTKIEGKLGSPEKPLSDLGLLSYRAYWAEIIVELLLKTEDEISIEEIAQKTAFTHADILHTCMALNMLKQYQGKHMIVLSDLIISKYTAKRPRKRINPQKLHWTAKNWHRSQLNFGW</sequence>
<evidence type="ECO:0000250" key="1"/>
<evidence type="ECO:0000250" key="2">
    <source>
        <dbReference type="UniProtKB" id="O94446"/>
    </source>
</evidence>
<evidence type="ECO:0000250" key="3">
    <source>
        <dbReference type="UniProtKB" id="Q08649"/>
    </source>
</evidence>
<evidence type="ECO:0000255" key="4"/>
<evidence type="ECO:0000255" key="5">
    <source>
        <dbReference type="PROSITE-ProRule" id="PRU01063"/>
    </source>
</evidence>
<evidence type="ECO:0000256" key="6">
    <source>
        <dbReference type="SAM" id="MobiDB-lite"/>
    </source>
</evidence>
<evidence type="ECO:0000305" key="7"/>
<proteinExistence type="inferred from homology"/>
<keyword id="KW-0007">Acetylation</keyword>
<keyword id="KW-0010">Activator</keyword>
<keyword id="KW-0156">Chromatin regulator</keyword>
<keyword id="KW-0158">Chromosome</keyword>
<keyword id="KW-0227">DNA damage</keyword>
<keyword id="KW-0234">DNA repair</keyword>
<keyword id="KW-0479">Metal-binding</keyword>
<keyword id="KW-0539">Nucleus</keyword>
<keyword id="KW-1185">Reference proteome</keyword>
<keyword id="KW-0804">Transcription</keyword>
<keyword id="KW-0805">Transcription regulation</keyword>
<keyword id="KW-0808">Transferase</keyword>
<keyword id="KW-0862">Zinc</keyword>
<keyword id="KW-0863">Zinc-finger</keyword>